<accession>Q10731</accession>
<feature type="signal peptide" evidence="1">
    <location>
        <begin position="1"/>
        <end position="22"/>
    </location>
</feature>
<feature type="chain" id="PRO_0000026724" description="Fungal protease inhibitor F">
    <location>
        <begin position="23"/>
        <end position="77"/>
    </location>
</feature>
<feature type="site" description="Reactive bond">
    <location>
        <begin position="51"/>
        <end position="52"/>
    </location>
</feature>
<feature type="disulfide bond" evidence="2">
    <location>
        <begin position="25"/>
        <end position="57"/>
    </location>
</feature>
<feature type="disulfide bond" evidence="2">
    <location>
        <begin position="36"/>
        <end position="49"/>
    </location>
</feature>
<feature type="disulfide bond" evidence="2">
    <location>
        <begin position="40"/>
        <end position="77"/>
    </location>
</feature>
<feature type="disulfide bond" evidence="2">
    <location>
        <begin position="59"/>
        <end position="71"/>
    </location>
</feature>
<comment type="function">
    <text>Highly specific for fungal protease and subtilisin.</text>
</comment>
<comment type="subcellular location">
    <subcellularLocation>
        <location>Secreted</location>
    </subcellularLocation>
</comment>
<comment type="tissue specificity">
    <text>Hemolymph.</text>
</comment>
<comment type="similarity">
    <text evidence="3">Belongs to the protease inhibitor I40 family.</text>
</comment>
<organism>
    <name type="scientific">Bombyx mori</name>
    <name type="common">Silk moth</name>
    <dbReference type="NCBI Taxonomy" id="7091"/>
    <lineage>
        <taxon>Eukaryota</taxon>
        <taxon>Metazoa</taxon>
        <taxon>Ecdysozoa</taxon>
        <taxon>Arthropoda</taxon>
        <taxon>Hexapoda</taxon>
        <taxon>Insecta</taxon>
        <taxon>Pterygota</taxon>
        <taxon>Neoptera</taxon>
        <taxon>Endopterygota</taxon>
        <taxon>Lepidoptera</taxon>
        <taxon>Glossata</taxon>
        <taxon>Ditrysia</taxon>
        <taxon>Bombycoidea</taxon>
        <taxon>Bombycidae</taxon>
        <taxon>Bombycinae</taxon>
        <taxon>Bombyx</taxon>
    </lineage>
</organism>
<dbReference type="EMBL" id="S83181">
    <property type="protein sequence ID" value="AAB46908.1"/>
    <property type="molecule type" value="mRNA"/>
</dbReference>
<dbReference type="EMBL" id="D38075">
    <property type="protein sequence ID" value="BAA22409.1"/>
    <property type="molecule type" value="mRNA"/>
</dbReference>
<dbReference type="PIR" id="JC4790">
    <property type="entry name" value="JC4790"/>
</dbReference>
<dbReference type="RefSeq" id="NP_001037532.1">
    <property type="nucleotide sequence ID" value="NM_001044067.1"/>
</dbReference>
<dbReference type="SMR" id="Q10731"/>
<dbReference type="STRING" id="7091.Q10731"/>
<dbReference type="MEROPS" id="I08.050"/>
<dbReference type="GeneID" id="693072"/>
<dbReference type="InParanoid" id="Q10731"/>
<dbReference type="Proteomes" id="UP000005204">
    <property type="component" value="Unassembled WGS sequence"/>
</dbReference>
<dbReference type="GO" id="GO:0005576">
    <property type="term" value="C:extracellular region"/>
    <property type="evidence" value="ECO:0007669"/>
    <property type="project" value="UniProtKB-SubCell"/>
</dbReference>
<dbReference type="GO" id="GO:0004867">
    <property type="term" value="F:serine-type endopeptidase inhibitor activity"/>
    <property type="evidence" value="ECO:0007669"/>
    <property type="project" value="UniProtKB-KW"/>
</dbReference>
<dbReference type="CDD" id="cd19941">
    <property type="entry name" value="TIL"/>
    <property type="match status" value="1"/>
</dbReference>
<dbReference type="Gene3D" id="2.10.25.10">
    <property type="entry name" value="Laminin"/>
    <property type="match status" value="1"/>
</dbReference>
<dbReference type="InterPro" id="IPR036084">
    <property type="entry name" value="Ser_inhib-like_sf"/>
</dbReference>
<dbReference type="InterPro" id="IPR002919">
    <property type="entry name" value="TIL_dom"/>
</dbReference>
<dbReference type="Pfam" id="PF01826">
    <property type="entry name" value="TIL"/>
    <property type="match status" value="1"/>
</dbReference>
<dbReference type="SUPFAM" id="SSF57567">
    <property type="entry name" value="Serine protease inhibitors"/>
    <property type="match status" value="1"/>
</dbReference>
<protein>
    <recommendedName>
        <fullName>Fungal protease inhibitor F</fullName>
        <shortName>FPI-F</shortName>
    </recommendedName>
</protein>
<evidence type="ECO:0000255" key="1"/>
<evidence type="ECO:0000269" key="2">
    <source>
    </source>
</evidence>
<evidence type="ECO:0000305" key="3"/>
<reference key="1">
    <citation type="journal article" date="1996" name="J. Biochem.">
        <title>Expression of Bombyx family fungal protease inhibitor F from Bombyx mori by baculovirus vector.</title>
        <authorList>
            <person name="Pham T.-N."/>
            <person name="Hayashi K."/>
            <person name="Takano R."/>
            <person name="Nakazawa H."/>
            <person name="Mori H."/>
            <person name="Ichida M."/>
            <person name="Itoh M."/>
            <person name="Eguchi M."/>
            <person name="Matsubara F."/>
            <person name="Hara S."/>
        </authorList>
    </citation>
    <scope>NUCLEOTIDE SEQUENCE [MRNA]</scope>
</reference>
<reference key="2">
    <citation type="journal article" date="1996" name="Nihon Sanshigaku Zasshi">
        <title>cDNA cloning and expression of a novel type protease inhibitor (FPI-F) from the silkworm, Bombyx mori.</title>
        <authorList>
            <person name="Itoh M."/>
            <person name="Takenaka T."/>
            <person name="Ashikari T."/>
            <person name="Eguchi M."/>
        </authorList>
    </citation>
    <scope>NUCLEOTIDE SEQUENCE [MRNA]</scope>
    <source>
        <strain>C124</strain>
        <tissue>Fat body</tissue>
    </source>
</reference>
<reference key="3">
    <citation type="journal article" date="1994" name="J. Biochem.">
        <title>Amino acid sequence of an inhibitor from the silkworm (Bombyx mori) hemolymph against fungal protease.</title>
        <authorList>
            <person name="Eguchi M."/>
            <person name="Itoh M."/>
            <person name="Nishino K."/>
            <person name="Shibata H."/>
            <person name="Tanaka T."/>
            <person name="Kamei-Hayashi K."/>
            <person name="Hara S."/>
        </authorList>
    </citation>
    <scope>PROTEIN SEQUENCE OF 23-77</scope>
</reference>
<reference key="4">
    <citation type="journal article" date="1996" name="J. Biochem.">
        <title>A new family of serine protease inhibitors (Bombyx family) as established from the unique topological relation between the positions of disulphide bridges and reactive site.</title>
        <authorList>
            <person name="Pham T.-N."/>
            <person name="Hayashi K."/>
            <person name="Takano R."/>
            <person name="Itoh M."/>
            <person name="Eguchi M."/>
            <person name="Shibata H."/>
            <person name="Tanaka T."/>
            <person name="Hara S."/>
        </authorList>
    </citation>
    <scope>DISULFIDE BONDS</scope>
</reference>
<keyword id="KW-0903">Direct protein sequencing</keyword>
<keyword id="KW-1015">Disulfide bond</keyword>
<keyword id="KW-0646">Protease inhibitor</keyword>
<keyword id="KW-1185">Reference proteome</keyword>
<keyword id="KW-0964">Secreted</keyword>
<keyword id="KW-0722">Serine protease inhibitor</keyword>
<keyword id="KW-0732">Signal</keyword>
<sequence length="77" mass="8492">MASKNLFVLFFIFALFAANIAALQCPKNSEVRNSPCPRTCNDPYGQNSCITVIRETCHCKGELVFDSDSICVPISQC</sequence>
<proteinExistence type="evidence at protein level"/>
<name>FPIF_BOMMO</name>